<keyword id="KW-0150">Chloroplast</keyword>
<keyword id="KW-0507">mRNA processing</keyword>
<keyword id="KW-0934">Plastid</keyword>
<keyword id="KW-0694">RNA-binding</keyword>
<keyword id="KW-0819">tRNA processing</keyword>
<organism>
    <name type="scientific">Erica tetralix</name>
    <name type="common">Cross-leaved heath</name>
    <dbReference type="NCBI Taxonomy" id="49144"/>
    <lineage>
        <taxon>Eukaryota</taxon>
        <taxon>Viridiplantae</taxon>
        <taxon>Streptophyta</taxon>
        <taxon>Embryophyta</taxon>
        <taxon>Tracheophyta</taxon>
        <taxon>Spermatophyta</taxon>
        <taxon>Magnoliopsida</taxon>
        <taxon>eudicotyledons</taxon>
        <taxon>Gunneridae</taxon>
        <taxon>Pentapetalae</taxon>
        <taxon>asterids</taxon>
        <taxon>Ericales</taxon>
        <taxon>Ericaceae</taxon>
        <taxon>Ericoideae</taxon>
        <taxon>Ericeae</taxon>
        <taxon>Erica</taxon>
    </lineage>
</organism>
<geneLocation type="chloroplast"/>
<sequence length="506" mass="60505">MEEFKRNLELDRSQQYDFIYPLIFQEYIYALAHDRVLKRSFFLENAGYNDKSSLLIVKRLITHLITQMYQQNHFLFSVNDSKQNPILGYNRNFYSQTIFEGFAVVVEIPFYLRLLSFLEGKERVKSYNLRSIHSIFPFLEAQIFHLNNILDILIPHPIHLEILVQTLRYWVKDASSLHFLRFFLYKYPIWNSLITPKKSSFSFSKRNQRFFLFLYNFHVSEYESIFVFLRTQSSHLLSISFETFLERISFYKKIELEVFTKSFKAILWVFKEPFLHYVRYRGKVILASKGTSFLMNKWKYYLVSFWQCYFYIWSQPIRIHINQLSNHSLDFLDYLSSVRLKPLMVRSQMIENAFLIETASKKFDTLIPITPMIGSLSKAQFCNVIGHPISKPVWAALSDSDIIERFAHIYRNISHYHSGYVKKKNLYRIKYILRLSCARTLARKHKSTVRAFSKRLGMGLLEEFFTDEEQVFYLTFPKASSTSGELYGRRIWYLDIICINDLANYE</sequence>
<gene>
    <name evidence="1" type="primary">matK</name>
</gene>
<dbReference type="EMBL" id="U61340">
    <property type="protein sequence ID" value="AAB93726.1"/>
    <property type="molecule type" value="Genomic_DNA"/>
</dbReference>
<dbReference type="GO" id="GO:0009507">
    <property type="term" value="C:chloroplast"/>
    <property type="evidence" value="ECO:0007669"/>
    <property type="project" value="UniProtKB-SubCell"/>
</dbReference>
<dbReference type="GO" id="GO:0003723">
    <property type="term" value="F:RNA binding"/>
    <property type="evidence" value="ECO:0007669"/>
    <property type="project" value="UniProtKB-KW"/>
</dbReference>
<dbReference type="GO" id="GO:0006397">
    <property type="term" value="P:mRNA processing"/>
    <property type="evidence" value="ECO:0007669"/>
    <property type="project" value="UniProtKB-KW"/>
</dbReference>
<dbReference type="GO" id="GO:0008380">
    <property type="term" value="P:RNA splicing"/>
    <property type="evidence" value="ECO:0007669"/>
    <property type="project" value="UniProtKB-UniRule"/>
</dbReference>
<dbReference type="GO" id="GO:0008033">
    <property type="term" value="P:tRNA processing"/>
    <property type="evidence" value="ECO:0007669"/>
    <property type="project" value="UniProtKB-KW"/>
</dbReference>
<dbReference type="HAMAP" id="MF_01390">
    <property type="entry name" value="MatK"/>
    <property type="match status" value="1"/>
</dbReference>
<dbReference type="InterPro" id="IPR024937">
    <property type="entry name" value="Domain_X"/>
</dbReference>
<dbReference type="InterPro" id="IPR002866">
    <property type="entry name" value="Maturase_MatK"/>
</dbReference>
<dbReference type="InterPro" id="IPR024942">
    <property type="entry name" value="Maturase_MatK_N"/>
</dbReference>
<dbReference type="PANTHER" id="PTHR34811">
    <property type="entry name" value="MATURASE K"/>
    <property type="match status" value="1"/>
</dbReference>
<dbReference type="PANTHER" id="PTHR34811:SF1">
    <property type="entry name" value="MATURASE K"/>
    <property type="match status" value="1"/>
</dbReference>
<dbReference type="Pfam" id="PF01348">
    <property type="entry name" value="Intron_maturas2"/>
    <property type="match status" value="1"/>
</dbReference>
<dbReference type="Pfam" id="PF01824">
    <property type="entry name" value="MatK_N"/>
    <property type="match status" value="1"/>
</dbReference>
<reference key="1">
    <citation type="journal article" date="1997" name="Am. J. Bot.">
        <title>Phylogenetics relationships of Rhododendroideae (Ericaceae).</title>
        <authorList>
            <person name="Kron K.A."/>
        </authorList>
    </citation>
    <scope>NUCLEOTIDE SEQUENCE [GENOMIC DNA]</scope>
</reference>
<protein>
    <recommendedName>
        <fullName evidence="1">Maturase K</fullName>
    </recommendedName>
    <alternativeName>
        <fullName evidence="1">Intron maturase</fullName>
    </alternativeName>
</protein>
<accession>O47157</accession>
<comment type="function">
    <text evidence="1">Usually encoded in the trnK tRNA gene intron. Probably assists in splicing its own and other chloroplast group II introns.</text>
</comment>
<comment type="subcellular location">
    <subcellularLocation>
        <location>Plastid</location>
        <location>Chloroplast</location>
    </subcellularLocation>
</comment>
<comment type="similarity">
    <text evidence="1">Belongs to the intron maturase 2 family. MatK subfamily.</text>
</comment>
<evidence type="ECO:0000255" key="1">
    <source>
        <dbReference type="HAMAP-Rule" id="MF_01390"/>
    </source>
</evidence>
<proteinExistence type="inferred from homology"/>
<feature type="chain" id="PRO_0000143376" description="Maturase K">
    <location>
        <begin position="1"/>
        <end position="506"/>
    </location>
</feature>
<name>MATK_ERITE</name>